<organism>
    <name type="scientific">Methanococcus aeolicus (strain ATCC BAA-1280 / DSM 17508 / OCM 812 / Nankai-3)</name>
    <dbReference type="NCBI Taxonomy" id="419665"/>
    <lineage>
        <taxon>Archaea</taxon>
        <taxon>Methanobacteriati</taxon>
        <taxon>Methanobacteriota</taxon>
        <taxon>Methanomada group</taxon>
        <taxon>Methanococci</taxon>
        <taxon>Methanococcales</taxon>
        <taxon>Methanococcaceae</taxon>
        <taxon>Methanococcus</taxon>
    </lineage>
</organism>
<evidence type="ECO:0000255" key="1">
    <source>
        <dbReference type="HAMAP-Rule" id="MF_00785"/>
    </source>
</evidence>
<gene>
    <name evidence="1" type="primary">cbiX</name>
    <name evidence="1" type="synonym">cfbA</name>
    <name type="ordered locus">Maeo_1381</name>
</gene>
<proteinExistence type="inferred from homology"/>
<sequence>MEALVLLGHGSRLPYSKEIVGKVAEKIKEKNIYDIVEIGMMEFNEPTIPQTINKVIAEGAKKIIIVPVFLAHGNHTKRDIPQILGLIECEEHHHEGEGGHHHHHHHHHGEKIEVPEGVEIIYRDPMGADDRVVDIVLDRAKGN</sequence>
<dbReference type="EC" id="4.99.1.3" evidence="1"/>
<dbReference type="EC" id="4.99.1.11" evidence="1"/>
<dbReference type="EMBL" id="CP000743">
    <property type="protein sequence ID" value="ABR56957.1"/>
    <property type="molecule type" value="Genomic_DNA"/>
</dbReference>
<dbReference type="RefSeq" id="WP_011974089.1">
    <property type="nucleotide sequence ID" value="NC_009635.1"/>
</dbReference>
<dbReference type="SMR" id="A6UWT5"/>
<dbReference type="STRING" id="419665.Maeo_1381"/>
<dbReference type="GeneID" id="5326995"/>
<dbReference type="GeneID" id="75304860"/>
<dbReference type="KEGG" id="mae:Maeo_1381"/>
<dbReference type="eggNOG" id="arCOG02246">
    <property type="taxonomic scope" value="Archaea"/>
</dbReference>
<dbReference type="HOGENOM" id="CLU_065901_2_1_2"/>
<dbReference type="OrthoDB" id="11653at2157"/>
<dbReference type="UniPathway" id="UPA00148">
    <property type="reaction ID" value="UER00223"/>
</dbReference>
<dbReference type="Proteomes" id="UP000001106">
    <property type="component" value="Chromosome"/>
</dbReference>
<dbReference type="GO" id="GO:0050897">
    <property type="term" value="F:cobalt ion binding"/>
    <property type="evidence" value="ECO:0007669"/>
    <property type="project" value="UniProtKB-UniRule"/>
</dbReference>
<dbReference type="GO" id="GO:0016151">
    <property type="term" value="F:nickel cation binding"/>
    <property type="evidence" value="ECO:0007669"/>
    <property type="project" value="UniProtKB-UniRule"/>
</dbReference>
<dbReference type="GO" id="GO:0016852">
    <property type="term" value="F:sirohydrochlorin cobaltochelatase activity"/>
    <property type="evidence" value="ECO:0007669"/>
    <property type="project" value="UniProtKB-UniRule"/>
</dbReference>
<dbReference type="GO" id="GO:0019251">
    <property type="term" value="P:anaerobic cobalamin biosynthetic process"/>
    <property type="evidence" value="ECO:0007669"/>
    <property type="project" value="UniProtKB-UniRule"/>
</dbReference>
<dbReference type="GO" id="GO:0015948">
    <property type="term" value="P:methanogenesis"/>
    <property type="evidence" value="ECO:0007669"/>
    <property type="project" value="UniProtKB-KW"/>
</dbReference>
<dbReference type="CDD" id="cd03416">
    <property type="entry name" value="CbiX_SirB_N"/>
    <property type="match status" value="1"/>
</dbReference>
<dbReference type="Gene3D" id="3.40.50.1400">
    <property type="match status" value="1"/>
</dbReference>
<dbReference type="HAMAP" id="MF_00785">
    <property type="entry name" value="CbiX"/>
    <property type="match status" value="1"/>
</dbReference>
<dbReference type="InterPro" id="IPR002762">
    <property type="entry name" value="CbiX-like"/>
</dbReference>
<dbReference type="InterPro" id="IPR023652">
    <property type="entry name" value="SiroHydchlorin_Cochelatase"/>
</dbReference>
<dbReference type="InterPro" id="IPR050963">
    <property type="entry name" value="Sirohydro_Cobaltochel/CbiX"/>
</dbReference>
<dbReference type="NCBIfam" id="NF033198">
    <property type="entry name" value="F430_CfbA"/>
    <property type="match status" value="1"/>
</dbReference>
<dbReference type="NCBIfam" id="NF002090">
    <property type="entry name" value="PRK00923.1"/>
    <property type="match status" value="1"/>
</dbReference>
<dbReference type="PANTHER" id="PTHR33542">
    <property type="entry name" value="SIROHYDROCHLORIN FERROCHELATASE, CHLOROPLASTIC"/>
    <property type="match status" value="1"/>
</dbReference>
<dbReference type="PANTHER" id="PTHR33542:SF3">
    <property type="entry name" value="SIROHYDROCHLORIN FERROCHELATASE, CHLOROPLASTIC"/>
    <property type="match status" value="1"/>
</dbReference>
<dbReference type="Pfam" id="PF01903">
    <property type="entry name" value="CbiX"/>
    <property type="match status" value="1"/>
</dbReference>
<dbReference type="SUPFAM" id="SSF53800">
    <property type="entry name" value="Chelatase"/>
    <property type="match status" value="1"/>
</dbReference>
<feature type="chain" id="PRO_1000046840" description="Sirohydrochlorin cobaltochelatase">
    <location>
        <begin position="1"/>
        <end position="143"/>
    </location>
</feature>
<feature type="active site" description="Proton acceptor" evidence="1">
    <location>
        <position position="9"/>
    </location>
</feature>
<feature type="binding site" evidence="1">
    <location>
        <position position="9"/>
    </location>
    <ligand>
        <name>Co(2+)</name>
        <dbReference type="ChEBI" id="CHEBI:48828"/>
    </ligand>
</feature>
<feature type="binding site" evidence="1">
    <location>
        <position position="9"/>
    </location>
    <ligand>
        <name>Ni(2+)</name>
        <dbReference type="ChEBI" id="CHEBI:49786"/>
    </ligand>
</feature>
<feature type="binding site" evidence="1">
    <location>
        <position position="45"/>
    </location>
    <ligand>
        <name>substrate</name>
    </ligand>
</feature>
<feature type="binding site" evidence="1">
    <location>
        <begin position="70"/>
        <end position="75"/>
    </location>
    <ligand>
        <name>substrate</name>
    </ligand>
</feature>
<feature type="binding site" evidence="1">
    <location>
        <position position="75"/>
    </location>
    <ligand>
        <name>Co(2+)</name>
        <dbReference type="ChEBI" id="CHEBI:48828"/>
    </ligand>
</feature>
<feature type="binding site" evidence="1">
    <location>
        <position position="75"/>
    </location>
    <ligand>
        <name>Ni(2+)</name>
        <dbReference type="ChEBI" id="CHEBI:49786"/>
    </ligand>
</feature>
<protein>
    <recommendedName>
        <fullName evidence="1">Sirohydrochlorin cobaltochelatase</fullName>
        <ecNumber evidence="1">4.99.1.3</ecNumber>
    </recommendedName>
    <alternativeName>
        <fullName evidence="1">CbiXS</fullName>
    </alternativeName>
    <alternativeName>
        <fullName evidence="1">Sirohydrochlorin nickelchelatase</fullName>
        <ecNumber evidence="1">4.99.1.11</ecNumber>
    </alternativeName>
</protein>
<accession>A6UWT5</accession>
<reference key="1">
    <citation type="submission" date="2007-06" db="EMBL/GenBank/DDBJ databases">
        <title>Complete sequence of Methanococcus aeolicus Nankai-3.</title>
        <authorList>
            <consortium name="US DOE Joint Genome Institute"/>
            <person name="Copeland A."/>
            <person name="Lucas S."/>
            <person name="Lapidus A."/>
            <person name="Barry K."/>
            <person name="Glavina del Rio T."/>
            <person name="Dalin E."/>
            <person name="Tice H."/>
            <person name="Pitluck S."/>
            <person name="Chain P."/>
            <person name="Malfatti S."/>
            <person name="Shin M."/>
            <person name="Vergez L."/>
            <person name="Schmutz J."/>
            <person name="Larimer F."/>
            <person name="Land M."/>
            <person name="Hauser L."/>
            <person name="Kyrpides N."/>
            <person name="Lykidis A."/>
            <person name="Sieprawska-Lupa M."/>
            <person name="Whitman W.B."/>
            <person name="Richardson P."/>
        </authorList>
    </citation>
    <scope>NUCLEOTIDE SEQUENCE [LARGE SCALE GENOMIC DNA]</scope>
    <source>
        <strain>ATCC BAA-1280 / DSM 17508 / OCM 812 / Nankai-3</strain>
    </source>
</reference>
<comment type="function">
    <text evidence="1">Catalyzes the insertion of Co(2+) into sirohydrochlorin as part of the anaerobic pathway to cobalamin biosynthesis. Involved in the biosynthesis of the unique nickel-containing tetrapyrrole coenzyme F430, the prosthetic group of methyl-coenzyme M reductase (MCR), which plays a key role in methanogenesis and anaerobic methane oxidation. Catalyzes the insertion of Ni(2+) into sirohydrochlorin to yield Ni-sirohydrochlorin.</text>
</comment>
<comment type="catalytic activity">
    <reaction evidence="1">
        <text>Co-sirohydrochlorin + 2 H(+) = sirohydrochlorin + Co(2+)</text>
        <dbReference type="Rhea" id="RHEA:15893"/>
        <dbReference type="ChEBI" id="CHEBI:15378"/>
        <dbReference type="ChEBI" id="CHEBI:48828"/>
        <dbReference type="ChEBI" id="CHEBI:58351"/>
        <dbReference type="ChEBI" id="CHEBI:60049"/>
        <dbReference type="EC" id="4.99.1.3"/>
    </reaction>
</comment>
<comment type="catalytic activity">
    <reaction evidence="1">
        <text>Ni-sirohydrochlorin + 2 H(+) = sirohydrochlorin + Ni(2+)</text>
        <dbReference type="Rhea" id="RHEA:52796"/>
        <dbReference type="ChEBI" id="CHEBI:15378"/>
        <dbReference type="ChEBI" id="CHEBI:49786"/>
        <dbReference type="ChEBI" id="CHEBI:58351"/>
        <dbReference type="ChEBI" id="CHEBI:136841"/>
        <dbReference type="EC" id="4.99.1.11"/>
    </reaction>
</comment>
<comment type="pathway">
    <text evidence="1">Cofactor biosynthesis; adenosylcobalamin biosynthesis; cob(II)yrinate a,c-diamide from sirohydrochlorin (anaerobic route): step 1/10.</text>
</comment>
<comment type="subunit">
    <text evidence="1">Homotetramer; dimer of dimers.</text>
</comment>
<comment type="similarity">
    <text evidence="1">Belongs to the CbiX family. CbiXS subfamily.</text>
</comment>
<name>CFBA_META3</name>
<keyword id="KW-0169">Cobalamin biosynthesis</keyword>
<keyword id="KW-0170">Cobalt</keyword>
<keyword id="KW-0456">Lyase</keyword>
<keyword id="KW-0479">Metal-binding</keyword>
<keyword id="KW-0484">Methanogenesis</keyword>
<keyword id="KW-0533">Nickel</keyword>